<reference key="1">
    <citation type="journal article" date="2005" name="Nature">
        <title>The map-based sequence of the rice genome.</title>
        <authorList>
            <consortium name="International rice genome sequencing project (IRGSP)"/>
        </authorList>
    </citation>
    <scope>NUCLEOTIDE SEQUENCE [LARGE SCALE GENOMIC DNA]</scope>
    <source>
        <strain>cv. Nipponbare</strain>
    </source>
</reference>
<reference key="2">
    <citation type="journal article" date="2013" name="Rice">
        <title>Improvement of the Oryza sativa Nipponbare reference genome using next generation sequence and optical map data.</title>
        <authorList>
            <person name="Kawahara Y."/>
            <person name="de la Bastide M."/>
            <person name="Hamilton J.P."/>
            <person name="Kanamori H."/>
            <person name="McCombie W.R."/>
            <person name="Ouyang S."/>
            <person name="Schwartz D.C."/>
            <person name="Tanaka T."/>
            <person name="Wu J."/>
            <person name="Zhou S."/>
            <person name="Childs K.L."/>
            <person name="Davidson R.M."/>
            <person name="Lin H."/>
            <person name="Quesada-Ocampo L."/>
            <person name="Vaillancourt B."/>
            <person name="Sakai H."/>
            <person name="Lee S.S."/>
            <person name="Kim J."/>
            <person name="Numa H."/>
            <person name="Itoh T."/>
            <person name="Buell C.R."/>
            <person name="Matsumoto T."/>
        </authorList>
    </citation>
    <scope>GENOME REANNOTATION</scope>
    <source>
        <strain>cv. Nipponbare</strain>
    </source>
</reference>
<reference key="3">
    <citation type="journal article" date="2005" name="PLoS Biol.">
        <title>The genomes of Oryza sativa: a history of duplications.</title>
        <authorList>
            <person name="Yu J."/>
            <person name="Wang J."/>
            <person name="Lin W."/>
            <person name="Li S."/>
            <person name="Li H."/>
            <person name="Zhou J."/>
            <person name="Ni P."/>
            <person name="Dong W."/>
            <person name="Hu S."/>
            <person name="Zeng C."/>
            <person name="Zhang J."/>
            <person name="Zhang Y."/>
            <person name="Li R."/>
            <person name="Xu Z."/>
            <person name="Li S."/>
            <person name="Li X."/>
            <person name="Zheng H."/>
            <person name="Cong L."/>
            <person name="Lin L."/>
            <person name="Yin J."/>
            <person name="Geng J."/>
            <person name="Li G."/>
            <person name="Shi J."/>
            <person name="Liu J."/>
            <person name="Lv H."/>
            <person name="Li J."/>
            <person name="Wang J."/>
            <person name="Deng Y."/>
            <person name="Ran L."/>
            <person name="Shi X."/>
            <person name="Wang X."/>
            <person name="Wu Q."/>
            <person name="Li C."/>
            <person name="Ren X."/>
            <person name="Wang J."/>
            <person name="Wang X."/>
            <person name="Li D."/>
            <person name="Liu D."/>
            <person name="Zhang X."/>
            <person name="Ji Z."/>
            <person name="Zhao W."/>
            <person name="Sun Y."/>
            <person name="Zhang Z."/>
            <person name="Bao J."/>
            <person name="Han Y."/>
            <person name="Dong L."/>
            <person name="Ji J."/>
            <person name="Chen P."/>
            <person name="Wu S."/>
            <person name="Liu J."/>
            <person name="Xiao Y."/>
            <person name="Bu D."/>
            <person name="Tan J."/>
            <person name="Yang L."/>
            <person name="Ye C."/>
            <person name="Zhang J."/>
            <person name="Xu J."/>
            <person name="Zhou Y."/>
            <person name="Yu Y."/>
            <person name="Zhang B."/>
            <person name="Zhuang S."/>
            <person name="Wei H."/>
            <person name="Liu B."/>
            <person name="Lei M."/>
            <person name="Yu H."/>
            <person name="Li Y."/>
            <person name="Xu H."/>
            <person name="Wei S."/>
            <person name="He X."/>
            <person name="Fang L."/>
            <person name="Zhang Z."/>
            <person name="Zhang Y."/>
            <person name="Huang X."/>
            <person name="Su Z."/>
            <person name="Tong W."/>
            <person name="Li J."/>
            <person name="Tong Z."/>
            <person name="Li S."/>
            <person name="Ye J."/>
            <person name="Wang L."/>
            <person name="Fang L."/>
            <person name="Lei T."/>
            <person name="Chen C.-S."/>
            <person name="Chen H.-C."/>
            <person name="Xu Z."/>
            <person name="Li H."/>
            <person name="Huang H."/>
            <person name="Zhang F."/>
            <person name="Xu H."/>
            <person name="Li N."/>
            <person name="Zhao C."/>
            <person name="Li S."/>
            <person name="Dong L."/>
            <person name="Huang Y."/>
            <person name="Li L."/>
            <person name="Xi Y."/>
            <person name="Qi Q."/>
            <person name="Li W."/>
            <person name="Zhang B."/>
            <person name="Hu W."/>
            <person name="Zhang Y."/>
            <person name="Tian X."/>
            <person name="Jiao Y."/>
            <person name="Liang X."/>
            <person name="Jin J."/>
            <person name="Gao L."/>
            <person name="Zheng W."/>
            <person name="Hao B."/>
            <person name="Liu S.-M."/>
            <person name="Wang W."/>
            <person name="Yuan L."/>
            <person name="Cao M."/>
            <person name="McDermott J."/>
            <person name="Samudrala R."/>
            <person name="Wang J."/>
            <person name="Wong G.K.-S."/>
            <person name="Yang H."/>
        </authorList>
    </citation>
    <scope>NUCLEOTIDE SEQUENCE [LARGE SCALE GENOMIC DNA]</scope>
    <source>
        <strain>cv. Nipponbare</strain>
    </source>
</reference>
<reference key="4">
    <citation type="journal article" date="2006" name="Mol. Genet. Genomics">
        <title>Genome-wide analysis of cyclin family in rice (Oryza sativa L.).</title>
        <authorList>
            <person name="La H."/>
            <person name="Li J."/>
            <person name="Ji Z."/>
            <person name="Cheng Y."/>
            <person name="Li X."/>
            <person name="Jiang S."/>
            <person name="Venkatesh P.N."/>
            <person name="Ramachandran S."/>
        </authorList>
    </citation>
    <scope>GENE FAMILY</scope>
    <scope>NOMENCLATURE</scope>
</reference>
<sequence length="363" mass="39250">MMYKHVGDDARGSSAGVVCCVDVVDDDVDALLCGEDAGELEREGEPAQGSSPSSSLSCAAAAAAAADDDDEDEDEHGVHGEVVQVTPGGEEHCYDYDYDVDVPVGAELVMPACSPPRTAVHRPGWSESVSWILKVRSVHGFQPATAYLAVSYMDRFMSSRSLPDHGWASQLLCVACLSLAAKMEESSAPPLLDLQIEGTRFIFEPRTIQRMELIVLVELDWRLRSVTPFAFVDFFACKVGSSGRSSRILALRACQIILSAIHELEFLNHCASSMAAAAVLFAVNESPAAMSHRSSVSSESAASWCIGLTEERISSCYQLLQRALNATARKRKRHPMILAACSSVTSSSSRSKRRKLDGHFGED</sequence>
<evidence type="ECO:0000256" key="1">
    <source>
        <dbReference type="SAM" id="MobiDB-lite"/>
    </source>
</evidence>
<evidence type="ECO:0000305" key="2"/>
<gene>
    <name type="primary">CYCD1-1</name>
    <name type="ordered locus">Os06g0236600</name>
    <name type="ordered locus">LOC_Os06g12980</name>
    <name type="ORF">OsJ_019891</name>
    <name type="ORF">OSJNBa0080E19.38</name>
</gene>
<keyword id="KW-0131">Cell cycle</keyword>
<keyword id="KW-0132">Cell division</keyword>
<keyword id="KW-0195">Cyclin</keyword>
<keyword id="KW-1185">Reference proteome</keyword>
<dbReference type="EMBL" id="AP005170">
    <property type="protein sequence ID" value="BAD37938.1"/>
    <property type="molecule type" value="Genomic_DNA"/>
</dbReference>
<dbReference type="EMBL" id="AP014962">
    <property type="protein sequence ID" value="BAS96960.1"/>
    <property type="molecule type" value="Genomic_DNA"/>
</dbReference>
<dbReference type="EMBL" id="CM000143">
    <property type="protein sequence ID" value="EAZ36408.1"/>
    <property type="molecule type" value="Genomic_DNA"/>
</dbReference>
<dbReference type="SMR" id="Q67V81"/>
<dbReference type="FunCoup" id="Q67V81">
    <property type="interactions" value="135"/>
</dbReference>
<dbReference type="STRING" id="39947.Q67V81"/>
<dbReference type="PaxDb" id="39947-Q67V81"/>
<dbReference type="EnsemblPlants" id="Os06t0236600-00">
    <property type="protein sequence ID" value="Os06t0236600-00"/>
    <property type="gene ID" value="Os06g0236600"/>
</dbReference>
<dbReference type="GeneID" id="9271619"/>
<dbReference type="Gramene" id="Os06t0236600-00">
    <property type="protein sequence ID" value="Os06t0236600-00"/>
    <property type="gene ID" value="Os06g0236600"/>
</dbReference>
<dbReference type="KEGG" id="osa:9271619"/>
<dbReference type="eggNOG" id="KOG0656">
    <property type="taxonomic scope" value="Eukaryota"/>
</dbReference>
<dbReference type="HOGENOM" id="CLU_048040_2_1_1"/>
<dbReference type="InParanoid" id="Q67V81"/>
<dbReference type="OMA" id="CFIEDER"/>
<dbReference type="OrthoDB" id="5590282at2759"/>
<dbReference type="Proteomes" id="UP000000763">
    <property type="component" value="Chromosome 6"/>
</dbReference>
<dbReference type="Proteomes" id="UP000007752">
    <property type="component" value="Chromosome 6"/>
</dbReference>
<dbReference type="Proteomes" id="UP000059680">
    <property type="component" value="Chromosome 6"/>
</dbReference>
<dbReference type="GO" id="GO:0000307">
    <property type="term" value="C:cyclin-dependent protein kinase holoenzyme complex"/>
    <property type="evidence" value="ECO:0000318"/>
    <property type="project" value="GO_Central"/>
</dbReference>
<dbReference type="GO" id="GO:0005737">
    <property type="term" value="C:cytoplasm"/>
    <property type="evidence" value="ECO:0000318"/>
    <property type="project" value="GO_Central"/>
</dbReference>
<dbReference type="GO" id="GO:0005634">
    <property type="term" value="C:nucleus"/>
    <property type="evidence" value="ECO:0000318"/>
    <property type="project" value="GO_Central"/>
</dbReference>
<dbReference type="GO" id="GO:0016538">
    <property type="term" value="F:cyclin-dependent protein serine/threonine kinase regulator activity"/>
    <property type="evidence" value="ECO:0000318"/>
    <property type="project" value="GO_Central"/>
</dbReference>
<dbReference type="GO" id="GO:0051301">
    <property type="term" value="P:cell division"/>
    <property type="evidence" value="ECO:0007669"/>
    <property type="project" value="UniProtKB-KW"/>
</dbReference>
<dbReference type="GO" id="GO:0000082">
    <property type="term" value="P:G1/S transition of mitotic cell cycle"/>
    <property type="evidence" value="ECO:0000318"/>
    <property type="project" value="GO_Central"/>
</dbReference>
<dbReference type="CDD" id="cd20543">
    <property type="entry name" value="CYCLIN_AtCycD-like_rpt1"/>
    <property type="match status" value="1"/>
</dbReference>
<dbReference type="CDD" id="cd20544">
    <property type="entry name" value="CYCLIN_AtCycD-like_rpt2"/>
    <property type="match status" value="1"/>
</dbReference>
<dbReference type="FunFam" id="1.10.472.10:FF:000174">
    <property type="entry name" value="Cyclin-D1-1"/>
    <property type="match status" value="1"/>
</dbReference>
<dbReference type="Gene3D" id="1.10.472.10">
    <property type="entry name" value="Cyclin-like"/>
    <property type="match status" value="2"/>
</dbReference>
<dbReference type="InterPro" id="IPR039361">
    <property type="entry name" value="Cyclin"/>
</dbReference>
<dbReference type="InterPro" id="IPR013763">
    <property type="entry name" value="Cyclin-like_dom"/>
</dbReference>
<dbReference type="InterPro" id="IPR036915">
    <property type="entry name" value="Cyclin-like_sf"/>
</dbReference>
<dbReference type="InterPro" id="IPR004367">
    <property type="entry name" value="Cyclin_C-dom"/>
</dbReference>
<dbReference type="InterPro" id="IPR006671">
    <property type="entry name" value="Cyclin_N"/>
</dbReference>
<dbReference type="PANTHER" id="PTHR10177">
    <property type="entry name" value="CYCLINS"/>
    <property type="match status" value="1"/>
</dbReference>
<dbReference type="Pfam" id="PF02984">
    <property type="entry name" value="Cyclin_C"/>
    <property type="match status" value="1"/>
</dbReference>
<dbReference type="Pfam" id="PF00134">
    <property type="entry name" value="Cyclin_N"/>
    <property type="match status" value="1"/>
</dbReference>
<dbReference type="SMART" id="SM00385">
    <property type="entry name" value="CYCLIN"/>
    <property type="match status" value="1"/>
</dbReference>
<dbReference type="SMART" id="SM01332">
    <property type="entry name" value="Cyclin_C"/>
    <property type="match status" value="1"/>
</dbReference>
<dbReference type="SUPFAM" id="SSF47954">
    <property type="entry name" value="Cyclin-like"/>
    <property type="match status" value="2"/>
</dbReference>
<accession>Q67V81</accession>
<accession>A0A0P0WUU5</accession>
<name>CCD11_ORYSJ</name>
<proteinExistence type="inferred from homology"/>
<organism>
    <name type="scientific">Oryza sativa subsp. japonica</name>
    <name type="common">Rice</name>
    <dbReference type="NCBI Taxonomy" id="39947"/>
    <lineage>
        <taxon>Eukaryota</taxon>
        <taxon>Viridiplantae</taxon>
        <taxon>Streptophyta</taxon>
        <taxon>Embryophyta</taxon>
        <taxon>Tracheophyta</taxon>
        <taxon>Spermatophyta</taxon>
        <taxon>Magnoliopsida</taxon>
        <taxon>Liliopsida</taxon>
        <taxon>Poales</taxon>
        <taxon>Poaceae</taxon>
        <taxon>BOP clade</taxon>
        <taxon>Oryzoideae</taxon>
        <taxon>Oryzeae</taxon>
        <taxon>Oryzinae</taxon>
        <taxon>Oryza</taxon>
        <taxon>Oryza sativa</taxon>
    </lineage>
</organism>
<comment type="similarity">
    <text evidence="2">Belongs to the cyclin family. Cyclin D subfamily.</text>
</comment>
<protein>
    <recommendedName>
        <fullName>Cyclin-D1-1</fullName>
    </recommendedName>
    <alternativeName>
        <fullName>G1/S-specific cyclin-D1-1</fullName>
        <shortName>CycD1;1</shortName>
    </alternativeName>
</protein>
<feature type="chain" id="PRO_0000287020" description="Cyclin-D1-1">
    <location>
        <begin position="1"/>
        <end position="363"/>
    </location>
</feature>
<feature type="region of interest" description="Disordered" evidence="1">
    <location>
        <begin position="39"/>
        <end position="77"/>
    </location>
</feature>
<feature type="compositionally biased region" description="Low complexity" evidence="1">
    <location>
        <begin position="50"/>
        <end position="65"/>
    </location>
</feature>
<feature type="compositionally biased region" description="Acidic residues" evidence="1">
    <location>
        <begin position="66"/>
        <end position="75"/>
    </location>
</feature>